<gene>
    <name evidence="1" type="primary">rpsB</name>
    <name type="ordered locus">CPE1700</name>
</gene>
<proteinExistence type="inferred from homology"/>
<sequence length="233" mass="26332">MSVISMKQLLEAGVHFGHQTRRWNPKMAPYIFTERNGIYIIDLQKTVKKAEEAYNFIREVSEAGKDVIFVGTKKQAQEAVKEEAERSNMYFVNHRWLGGMLTNFTTIKTRINRLNKLDEMEQDGTFDVLPKKEVIKLKLEREKLQRNLGGIKELDASNIGAMFVVDPRKEKNAIAEAKILGIPVVAIVDTNCDPEEVDYVIPGNDDAIRAVKLIAGKMADAIIEGRQGEQLAE</sequence>
<accession>Q8XJQ6</accession>
<keyword id="KW-1185">Reference proteome</keyword>
<keyword id="KW-0687">Ribonucleoprotein</keyword>
<keyword id="KW-0689">Ribosomal protein</keyword>
<reference key="1">
    <citation type="journal article" date="2002" name="Proc. Natl. Acad. Sci. U.S.A.">
        <title>Complete genome sequence of Clostridium perfringens, an anaerobic flesh-eater.</title>
        <authorList>
            <person name="Shimizu T."/>
            <person name="Ohtani K."/>
            <person name="Hirakawa H."/>
            <person name="Ohshima K."/>
            <person name="Yamashita A."/>
            <person name="Shiba T."/>
            <person name="Ogasawara N."/>
            <person name="Hattori M."/>
            <person name="Kuhara S."/>
            <person name="Hayashi H."/>
        </authorList>
    </citation>
    <scope>NUCLEOTIDE SEQUENCE [LARGE SCALE GENOMIC DNA]</scope>
    <source>
        <strain>13 / Type A</strain>
    </source>
</reference>
<feature type="chain" id="PRO_0000134157" description="Small ribosomal subunit protein uS2">
    <location>
        <begin position="1"/>
        <end position="233"/>
    </location>
</feature>
<comment type="similarity">
    <text evidence="1">Belongs to the universal ribosomal protein uS2 family.</text>
</comment>
<organism>
    <name type="scientific">Clostridium perfringens (strain 13 / Type A)</name>
    <dbReference type="NCBI Taxonomy" id="195102"/>
    <lineage>
        <taxon>Bacteria</taxon>
        <taxon>Bacillati</taxon>
        <taxon>Bacillota</taxon>
        <taxon>Clostridia</taxon>
        <taxon>Eubacteriales</taxon>
        <taxon>Clostridiaceae</taxon>
        <taxon>Clostridium</taxon>
    </lineage>
</organism>
<protein>
    <recommendedName>
        <fullName evidence="1">Small ribosomal subunit protein uS2</fullName>
    </recommendedName>
    <alternativeName>
        <fullName evidence="2">30S ribosomal protein S2</fullName>
    </alternativeName>
</protein>
<name>RS2_CLOPE</name>
<evidence type="ECO:0000255" key="1">
    <source>
        <dbReference type="HAMAP-Rule" id="MF_00291"/>
    </source>
</evidence>
<evidence type="ECO:0000305" key="2"/>
<dbReference type="EMBL" id="BA000016">
    <property type="protein sequence ID" value="BAB81406.1"/>
    <property type="molecule type" value="Genomic_DNA"/>
</dbReference>
<dbReference type="RefSeq" id="WP_003470452.1">
    <property type="nucleotide sequence ID" value="NC_003366.1"/>
</dbReference>
<dbReference type="SMR" id="Q8XJQ6"/>
<dbReference type="STRING" id="195102.gene:10490964"/>
<dbReference type="GeneID" id="93001762"/>
<dbReference type="KEGG" id="cpe:CPE1700"/>
<dbReference type="HOGENOM" id="CLU_040318_1_2_9"/>
<dbReference type="Proteomes" id="UP000000818">
    <property type="component" value="Chromosome"/>
</dbReference>
<dbReference type="GO" id="GO:0022627">
    <property type="term" value="C:cytosolic small ribosomal subunit"/>
    <property type="evidence" value="ECO:0007669"/>
    <property type="project" value="TreeGrafter"/>
</dbReference>
<dbReference type="GO" id="GO:0003735">
    <property type="term" value="F:structural constituent of ribosome"/>
    <property type="evidence" value="ECO:0007669"/>
    <property type="project" value="InterPro"/>
</dbReference>
<dbReference type="GO" id="GO:0006412">
    <property type="term" value="P:translation"/>
    <property type="evidence" value="ECO:0007669"/>
    <property type="project" value="UniProtKB-UniRule"/>
</dbReference>
<dbReference type="CDD" id="cd01425">
    <property type="entry name" value="RPS2"/>
    <property type="match status" value="1"/>
</dbReference>
<dbReference type="FunFam" id="1.10.287.610:FF:000001">
    <property type="entry name" value="30S ribosomal protein S2"/>
    <property type="match status" value="1"/>
</dbReference>
<dbReference type="Gene3D" id="3.40.50.10490">
    <property type="entry name" value="Glucose-6-phosphate isomerase like protein, domain 1"/>
    <property type="match status" value="1"/>
</dbReference>
<dbReference type="Gene3D" id="1.10.287.610">
    <property type="entry name" value="Helix hairpin bin"/>
    <property type="match status" value="1"/>
</dbReference>
<dbReference type="HAMAP" id="MF_00291_B">
    <property type="entry name" value="Ribosomal_uS2_B"/>
    <property type="match status" value="1"/>
</dbReference>
<dbReference type="InterPro" id="IPR001865">
    <property type="entry name" value="Ribosomal_uS2"/>
</dbReference>
<dbReference type="InterPro" id="IPR005706">
    <property type="entry name" value="Ribosomal_uS2_bac/mit/plastid"/>
</dbReference>
<dbReference type="InterPro" id="IPR018130">
    <property type="entry name" value="Ribosomal_uS2_CS"/>
</dbReference>
<dbReference type="InterPro" id="IPR023591">
    <property type="entry name" value="Ribosomal_uS2_flav_dom_sf"/>
</dbReference>
<dbReference type="NCBIfam" id="TIGR01011">
    <property type="entry name" value="rpsB_bact"/>
    <property type="match status" value="1"/>
</dbReference>
<dbReference type="PANTHER" id="PTHR12534">
    <property type="entry name" value="30S RIBOSOMAL PROTEIN S2 PROKARYOTIC AND ORGANELLAR"/>
    <property type="match status" value="1"/>
</dbReference>
<dbReference type="PANTHER" id="PTHR12534:SF0">
    <property type="entry name" value="SMALL RIBOSOMAL SUBUNIT PROTEIN US2M"/>
    <property type="match status" value="1"/>
</dbReference>
<dbReference type="Pfam" id="PF00318">
    <property type="entry name" value="Ribosomal_S2"/>
    <property type="match status" value="1"/>
</dbReference>
<dbReference type="PRINTS" id="PR00395">
    <property type="entry name" value="RIBOSOMALS2"/>
</dbReference>
<dbReference type="SUPFAM" id="SSF52313">
    <property type="entry name" value="Ribosomal protein S2"/>
    <property type="match status" value="1"/>
</dbReference>
<dbReference type="PROSITE" id="PS00962">
    <property type="entry name" value="RIBOSOMAL_S2_1"/>
    <property type="match status" value="1"/>
</dbReference>